<name>Y007_MYCTU</name>
<reference key="1">
    <citation type="journal article" date="1998" name="Nature">
        <title>Deciphering the biology of Mycobacterium tuberculosis from the complete genome sequence.</title>
        <authorList>
            <person name="Cole S.T."/>
            <person name="Brosch R."/>
            <person name="Parkhill J."/>
            <person name="Garnier T."/>
            <person name="Churcher C.M."/>
            <person name="Harris D.E."/>
            <person name="Gordon S.V."/>
            <person name="Eiglmeier K."/>
            <person name="Gas S."/>
            <person name="Barry C.E. III"/>
            <person name="Tekaia F."/>
            <person name="Badcock K."/>
            <person name="Basham D."/>
            <person name="Brown D."/>
            <person name="Chillingworth T."/>
            <person name="Connor R."/>
            <person name="Davies R.M."/>
            <person name="Devlin K."/>
            <person name="Feltwell T."/>
            <person name="Gentles S."/>
            <person name="Hamlin N."/>
            <person name="Holroyd S."/>
            <person name="Hornsby T."/>
            <person name="Jagels K."/>
            <person name="Krogh A."/>
            <person name="McLean J."/>
            <person name="Moule S."/>
            <person name="Murphy L.D."/>
            <person name="Oliver S."/>
            <person name="Osborne J."/>
            <person name="Quail M.A."/>
            <person name="Rajandream M.A."/>
            <person name="Rogers J."/>
            <person name="Rutter S."/>
            <person name="Seeger K."/>
            <person name="Skelton S."/>
            <person name="Squares S."/>
            <person name="Squares R."/>
            <person name="Sulston J.E."/>
            <person name="Taylor K."/>
            <person name="Whitehead S."/>
            <person name="Barrell B.G."/>
        </authorList>
    </citation>
    <scope>NUCLEOTIDE SEQUENCE [LARGE SCALE GENOMIC DNA]</scope>
    <source>
        <strain>ATCC 25618 / H37Rv</strain>
    </source>
</reference>
<reference key="2">
    <citation type="journal article" date="2011" name="Mol. Cell. Proteomics">
        <title>Proteogenomic analysis of Mycobacterium tuberculosis by high resolution mass spectrometry.</title>
        <authorList>
            <person name="Kelkar D.S."/>
            <person name="Kumar D."/>
            <person name="Kumar P."/>
            <person name="Balakrishnan L."/>
            <person name="Muthusamy B."/>
            <person name="Yadav A.K."/>
            <person name="Shrivastava P."/>
            <person name="Marimuthu A."/>
            <person name="Anand S."/>
            <person name="Sundaram H."/>
            <person name="Kingsbury R."/>
            <person name="Harsha H.C."/>
            <person name="Nair B."/>
            <person name="Prasad T.S."/>
            <person name="Chauhan D.S."/>
            <person name="Katoch K."/>
            <person name="Katoch V.M."/>
            <person name="Kumar P."/>
            <person name="Chaerkady R."/>
            <person name="Ramachandran S."/>
            <person name="Dash D."/>
            <person name="Pandey A."/>
        </authorList>
    </citation>
    <scope>IDENTIFICATION BY MASS SPECTROMETRY [LARGE SCALE ANALYSIS]</scope>
    <source>
        <strain>ATCC 25618 / H37Rv</strain>
    </source>
</reference>
<gene>
    <name type="ordered locus">Rv0007</name>
    <name type="ORF">MTCY10H4.05</name>
</gene>
<keyword id="KW-1003">Cell membrane</keyword>
<keyword id="KW-0472">Membrane</keyword>
<keyword id="KW-1185">Reference proteome</keyword>
<keyword id="KW-0812">Transmembrane</keyword>
<keyword id="KW-1133">Transmembrane helix</keyword>
<dbReference type="EMBL" id="AL123456">
    <property type="protein sequence ID" value="CCP42729.1"/>
    <property type="molecule type" value="Genomic_DNA"/>
</dbReference>
<dbReference type="PIR" id="E70698">
    <property type="entry name" value="E70698"/>
</dbReference>
<dbReference type="RefSeq" id="NP_214521.1">
    <property type="nucleotide sequence ID" value="NC_000962.3"/>
</dbReference>
<dbReference type="RefSeq" id="WP_003400291.1">
    <property type="nucleotide sequence ID" value="NZ_NVQJ01000005.1"/>
</dbReference>
<dbReference type="SMR" id="P9WMA7"/>
<dbReference type="STRING" id="83332.Rv0007"/>
<dbReference type="PaxDb" id="83332-Rv0007"/>
<dbReference type="DNASU" id="885982"/>
<dbReference type="GeneID" id="885982"/>
<dbReference type="KEGG" id="mtu:Rv0007"/>
<dbReference type="KEGG" id="mtv:RVBD_0007"/>
<dbReference type="TubercuList" id="Rv0007"/>
<dbReference type="eggNOG" id="COG3266">
    <property type="taxonomic scope" value="Bacteria"/>
</dbReference>
<dbReference type="InParanoid" id="P9WMA7"/>
<dbReference type="OrthoDB" id="3240216at2"/>
<dbReference type="Proteomes" id="UP000001584">
    <property type="component" value="Chromosome"/>
</dbReference>
<dbReference type="GO" id="GO:0009274">
    <property type="term" value="C:peptidoglycan-based cell wall"/>
    <property type="evidence" value="ECO:0007005"/>
    <property type="project" value="MTBBASE"/>
</dbReference>
<dbReference type="GO" id="GO:0005886">
    <property type="term" value="C:plasma membrane"/>
    <property type="evidence" value="ECO:0007005"/>
    <property type="project" value="MTBBASE"/>
</dbReference>
<dbReference type="InterPro" id="IPR021949">
    <property type="entry name" value="DUF3566_TM"/>
</dbReference>
<dbReference type="Pfam" id="PF12089">
    <property type="entry name" value="DUF3566"/>
    <property type="match status" value="1"/>
</dbReference>
<sequence length="304" mass="31073">MTAPNEPGALSKGDGPNADGLVDRGGAHRAATGPGRIPDAGDPPPWQRAATRQSQAGHRQPPPVSHPEGRPTNPPAAADARLNRFISGASAPVTGPAAAVRTPQPDPDASLGCGDGSPAEAYASELPDLSGPTPRAPQRNPAPARPAEGGAGSRGDSAAGSSGGRSITAESRDARVQLSARRSRGPVRASMQIRRIDPWSTLKVSLLLSVALFFVWMITVAFLYLVLGGMGVWAKLNSNVGDLLNNASGSSAELVSSGTIFGGAFLIGLVNIVLMTALATIGAFVYNLITDLIGGIEVTLADRD</sequence>
<protein>
    <recommendedName>
        <fullName>Uncharacterized protein Rv0007</fullName>
    </recommendedName>
</protein>
<feature type="chain" id="PRO_0000103637" description="Uncharacterized protein Rv0007">
    <location>
        <begin position="1"/>
        <end position="304"/>
    </location>
</feature>
<feature type="transmembrane region" description="Helical" evidence="1">
    <location>
        <begin position="206"/>
        <end position="226"/>
    </location>
</feature>
<feature type="transmembrane region" description="Helical" evidence="1">
    <location>
        <begin position="265"/>
        <end position="285"/>
    </location>
</feature>
<feature type="region of interest" description="Disordered" evidence="2">
    <location>
        <begin position="1"/>
        <end position="183"/>
    </location>
</feature>
<feature type="compositionally biased region" description="Low complexity" evidence="2">
    <location>
        <begin position="132"/>
        <end position="166"/>
    </location>
</feature>
<organism>
    <name type="scientific">Mycobacterium tuberculosis (strain ATCC 25618 / H37Rv)</name>
    <dbReference type="NCBI Taxonomy" id="83332"/>
    <lineage>
        <taxon>Bacteria</taxon>
        <taxon>Bacillati</taxon>
        <taxon>Actinomycetota</taxon>
        <taxon>Actinomycetes</taxon>
        <taxon>Mycobacteriales</taxon>
        <taxon>Mycobacteriaceae</taxon>
        <taxon>Mycobacterium</taxon>
        <taxon>Mycobacterium tuberculosis complex</taxon>
    </lineage>
</organism>
<accession>P9WMA7</accession>
<accession>L0T237</accession>
<accession>P71575</accession>
<proteinExistence type="evidence at protein level"/>
<comment type="subcellular location">
    <subcellularLocation>
        <location evidence="3">Cell membrane</location>
        <topology evidence="3">Multi-pass membrane protein</topology>
    </subcellularLocation>
</comment>
<comment type="similarity">
    <text evidence="3">To M.leprae ML0007.</text>
</comment>
<evidence type="ECO:0000255" key="1"/>
<evidence type="ECO:0000256" key="2">
    <source>
        <dbReference type="SAM" id="MobiDB-lite"/>
    </source>
</evidence>
<evidence type="ECO:0000305" key="3"/>